<keyword id="KW-0030">Aminoacyl-tRNA synthetase</keyword>
<keyword id="KW-0067">ATP-binding</keyword>
<keyword id="KW-0963">Cytoplasm</keyword>
<keyword id="KW-0436">Ligase</keyword>
<keyword id="KW-0547">Nucleotide-binding</keyword>
<keyword id="KW-0648">Protein biosynthesis</keyword>
<keyword id="KW-1185">Reference proteome</keyword>
<organism>
    <name type="scientific">Desulforapulum autotrophicum (strain ATCC 43914 / DSM 3382 / VKM B-1955 / HRM2)</name>
    <name type="common">Desulfobacterium autotrophicum</name>
    <dbReference type="NCBI Taxonomy" id="177437"/>
    <lineage>
        <taxon>Bacteria</taxon>
        <taxon>Pseudomonadati</taxon>
        <taxon>Thermodesulfobacteriota</taxon>
        <taxon>Desulfobacteria</taxon>
        <taxon>Desulfobacterales</taxon>
        <taxon>Desulfobacteraceae</taxon>
        <taxon>Desulforapulum</taxon>
    </lineage>
</organism>
<sequence length="425" mass="47808">MIQTIRGFRDILPGETPLWQTIERAASQLFEDFGFQEIRLPLIERTELFARSIGEVTDIVEKEMYTFPDRKGENITLRPEATASVVRSYIQHKMYAADPIQKLYTMGPMFRRERPQKGRYRQFFQINAEVFGIASPYIDAQLILLLNELFKRLGLTDLTAHLNSLGCRECRPLFHRALTEFLVSKQDRLCSDCRRRMDKNPLRTLDCKVPGCREAMQDAPTTLDHLCSDCSDHFTTVKATLKAQGVDFLVDKTLVRGLDYYSRTAFEIQTTALGAQSAVAGGGRYDALIKELGGPEVPAIGFAIGLDRLAEVMAQLKGCPAPRGPDLFIIPLGPGAMEKAYLCSSRLNLVGIRSETDYNGKSLKSLMKRADKLNAGHALILDYRQPDKNAPVLRNMKTREQVTLGLEDPTDEVIKILTNEGTLRD</sequence>
<evidence type="ECO:0000255" key="1">
    <source>
        <dbReference type="HAMAP-Rule" id="MF_00127"/>
    </source>
</evidence>
<name>SYH_DESAH</name>
<accession>C0QFI0</accession>
<protein>
    <recommendedName>
        <fullName evidence="1">Histidine--tRNA ligase</fullName>
        <ecNumber evidence="1">6.1.1.21</ecNumber>
    </recommendedName>
    <alternativeName>
        <fullName evidence="1">Histidyl-tRNA synthetase</fullName>
        <shortName evidence="1">HisRS</shortName>
    </alternativeName>
</protein>
<dbReference type="EC" id="6.1.1.21" evidence="1"/>
<dbReference type="EMBL" id="CP001087">
    <property type="protein sequence ID" value="ACN13376.1"/>
    <property type="molecule type" value="Genomic_DNA"/>
</dbReference>
<dbReference type="RefSeq" id="WP_012662625.1">
    <property type="nucleotide sequence ID" value="NC_012108.1"/>
</dbReference>
<dbReference type="SMR" id="C0QFI0"/>
<dbReference type="STRING" id="177437.HRM2_02540"/>
<dbReference type="KEGG" id="dat:HRM2_02540"/>
<dbReference type="eggNOG" id="COG0124">
    <property type="taxonomic scope" value="Bacteria"/>
</dbReference>
<dbReference type="HOGENOM" id="CLU_025113_1_1_7"/>
<dbReference type="OrthoDB" id="9800814at2"/>
<dbReference type="Proteomes" id="UP000000442">
    <property type="component" value="Chromosome"/>
</dbReference>
<dbReference type="GO" id="GO:0005737">
    <property type="term" value="C:cytoplasm"/>
    <property type="evidence" value="ECO:0007669"/>
    <property type="project" value="UniProtKB-SubCell"/>
</dbReference>
<dbReference type="GO" id="GO:0005524">
    <property type="term" value="F:ATP binding"/>
    <property type="evidence" value="ECO:0007669"/>
    <property type="project" value="UniProtKB-UniRule"/>
</dbReference>
<dbReference type="GO" id="GO:0004821">
    <property type="term" value="F:histidine-tRNA ligase activity"/>
    <property type="evidence" value="ECO:0007669"/>
    <property type="project" value="UniProtKB-UniRule"/>
</dbReference>
<dbReference type="GO" id="GO:0006427">
    <property type="term" value="P:histidyl-tRNA aminoacylation"/>
    <property type="evidence" value="ECO:0007669"/>
    <property type="project" value="UniProtKB-UniRule"/>
</dbReference>
<dbReference type="CDD" id="cd00773">
    <property type="entry name" value="HisRS-like_core"/>
    <property type="match status" value="1"/>
</dbReference>
<dbReference type="Gene3D" id="3.40.50.800">
    <property type="entry name" value="Anticodon-binding domain"/>
    <property type="match status" value="1"/>
</dbReference>
<dbReference type="Gene3D" id="3.30.930.10">
    <property type="entry name" value="Bira Bifunctional Protein, Domain 2"/>
    <property type="match status" value="1"/>
</dbReference>
<dbReference type="HAMAP" id="MF_00127">
    <property type="entry name" value="His_tRNA_synth"/>
    <property type="match status" value="1"/>
</dbReference>
<dbReference type="InterPro" id="IPR006195">
    <property type="entry name" value="aa-tRNA-synth_II"/>
</dbReference>
<dbReference type="InterPro" id="IPR045864">
    <property type="entry name" value="aa-tRNA-synth_II/BPL/LPL"/>
</dbReference>
<dbReference type="InterPro" id="IPR004154">
    <property type="entry name" value="Anticodon-bd"/>
</dbReference>
<dbReference type="InterPro" id="IPR036621">
    <property type="entry name" value="Anticodon-bd_dom_sf"/>
</dbReference>
<dbReference type="InterPro" id="IPR015807">
    <property type="entry name" value="His-tRNA-ligase"/>
</dbReference>
<dbReference type="InterPro" id="IPR041715">
    <property type="entry name" value="HisRS-like_core"/>
</dbReference>
<dbReference type="InterPro" id="IPR004516">
    <property type="entry name" value="HisRS/HisZ"/>
</dbReference>
<dbReference type="NCBIfam" id="TIGR00442">
    <property type="entry name" value="hisS"/>
    <property type="match status" value="1"/>
</dbReference>
<dbReference type="PANTHER" id="PTHR43707:SF1">
    <property type="entry name" value="HISTIDINE--TRNA LIGASE, MITOCHONDRIAL-RELATED"/>
    <property type="match status" value="1"/>
</dbReference>
<dbReference type="PANTHER" id="PTHR43707">
    <property type="entry name" value="HISTIDYL-TRNA SYNTHETASE"/>
    <property type="match status" value="1"/>
</dbReference>
<dbReference type="Pfam" id="PF03129">
    <property type="entry name" value="HGTP_anticodon"/>
    <property type="match status" value="1"/>
</dbReference>
<dbReference type="Pfam" id="PF13393">
    <property type="entry name" value="tRNA-synt_His"/>
    <property type="match status" value="1"/>
</dbReference>
<dbReference type="PIRSF" id="PIRSF001549">
    <property type="entry name" value="His-tRNA_synth"/>
    <property type="match status" value="1"/>
</dbReference>
<dbReference type="SUPFAM" id="SSF52954">
    <property type="entry name" value="Class II aaRS ABD-related"/>
    <property type="match status" value="1"/>
</dbReference>
<dbReference type="SUPFAM" id="SSF55681">
    <property type="entry name" value="Class II aaRS and biotin synthetases"/>
    <property type="match status" value="1"/>
</dbReference>
<dbReference type="PROSITE" id="PS50862">
    <property type="entry name" value="AA_TRNA_LIGASE_II"/>
    <property type="match status" value="1"/>
</dbReference>
<reference key="1">
    <citation type="journal article" date="2009" name="Environ. Microbiol.">
        <title>Genome sequence of Desulfobacterium autotrophicum HRM2, a marine sulfate reducer oxidizing organic carbon completely to carbon dioxide.</title>
        <authorList>
            <person name="Strittmatter A.W."/>
            <person name="Liesegang H."/>
            <person name="Rabus R."/>
            <person name="Decker I."/>
            <person name="Amann J."/>
            <person name="Andres S."/>
            <person name="Henne A."/>
            <person name="Fricke W.F."/>
            <person name="Martinez-Arias R."/>
            <person name="Bartels D."/>
            <person name="Goesmann A."/>
            <person name="Krause L."/>
            <person name="Puehler A."/>
            <person name="Klenk H.P."/>
            <person name="Richter M."/>
            <person name="Schuler M."/>
            <person name="Gloeckner F.O."/>
            <person name="Meyerdierks A."/>
            <person name="Gottschalk G."/>
            <person name="Amann R."/>
        </authorList>
    </citation>
    <scope>NUCLEOTIDE SEQUENCE [LARGE SCALE GENOMIC DNA]</scope>
    <source>
        <strain>ATCC 43914 / DSM 3382 / VKM B-1955 / HRM2</strain>
    </source>
</reference>
<feature type="chain" id="PRO_1000203132" description="Histidine--tRNA ligase">
    <location>
        <begin position="1"/>
        <end position="425"/>
    </location>
</feature>
<gene>
    <name evidence="1" type="primary">hisS</name>
    <name type="ordered locus">HRM2_02540</name>
</gene>
<comment type="catalytic activity">
    <reaction evidence="1">
        <text>tRNA(His) + L-histidine + ATP = L-histidyl-tRNA(His) + AMP + diphosphate + H(+)</text>
        <dbReference type="Rhea" id="RHEA:17313"/>
        <dbReference type="Rhea" id="RHEA-COMP:9665"/>
        <dbReference type="Rhea" id="RHEA-COMP:9689"/>
        <dbReference type="ChEBI" id="CHEBI:15378"/>
        <dbReference type="ChEBI" id="CHEBI:30616"/>
        <dbReference type="ChEBI" id="CHEBI:33019"/>
        <dbReference type="ChEBI" id="CHEBI:57595"/>
        <dbReference type="ChEBI" id="CHEBI:78442"/>
        <dbReference type="ChEBI" id="CHEBI:78527"/>
        <dbReference type="ChEBI" id="CHEBI:456215"/>
        <dbReference type="EC" id="6.1.1.21"/>
    </reaction>
</comment>
<comment type="subunit">
    <text evidence="1">Homodimer.</text>
</comment>
<comment type="subcellular location">
    <subcellularLocation>
        <location evidence="1">Cytoplasm</location>
    </subcellularLocation>
</comment>
<comment type="similarity">
    <text evidence="1">Belongs to the class-II aminoacyl-tRNA synthetase family.</text>
</comment>
<proteinExistence type="inferred from homology"/>